<sequence>MKFVDSATVFVQAGDGGRGCVSFRREKYVPKGGPDGGDGGDGGNVWLRTNSHLTTLLDFKYRKKYLAPRGAHGMGSRKAGRKGKDIVIDVPIGTLVRNAESMEVIADLTRPDEEIMIARGGHGGRGNQHFATSTNQAPRRSEPGWKGEELELAMELKLMADVGLVGFPNAGKSTLISVLSAARPKIADYPFTTLVPNLGIVRYEEYKSFVMADIPGIIEGAAEGRGLGLQFLRHIERTKILALLVSADSPDILAEYGTLVAELEKFGHGLIQKPRLLVVTKMDIAPGDFVVPEAPEGVGLIAVSSVAGKGMKELKDELWRQVSLCERQAEPPEDGE</sequence>
<comment type="function">
    <text evidence="1">An essential GTPase which binds GTP, GDP and possibly (p)ppGpp with moderate affinity, with high nucleotide exchange rates and a fairly low GTP hydrolysis rate. Plays a role in control of the cell cycle, stress response, ribosome biogenesis and in those bacteria that undergo differentiation, in morphogenesis control.</text>
</comment>
<comment type="cofactor">
    <cofactor evidence="1">
        <name>Mg(2+)</name>
        <dbReference type="ChEBI" id="CHEBI:18420"/>
    </cofactor>
</comment>
<comment type="subunit">
    <text evidence="1">Monomer.</text>
</comment>
<comment type="subcellular location">
    <subcellularLocation>
        <location evidence="1">Cytoplasm</location>
    </subcellularLocation>
</comment>
<comment type="similarity">
    <text evidence="1">Belongs to the TRAFAC class OBG-HflX-like GTPase superfamily. OBG GTPase family.</text>
</comment>
<gene>
    <name evidence="1" type="primary">obg</name>
    <name type="ordered locus">Cvib_0231</name>
</gene>
<accession>A4SCP4</accession>
<dbReference type="EC" id="3.6.5.-" evidence="1"/>
<dbReference type="EMBL" id="CP000607">
    <property type="protein sequence ID" value="ABP36253.1"/>
    <property type="molecule type" value="Genomic_DNA"/>
</dbReference>
<dbReference type="SMR" id="A4SCP4"/>
<dbReference type="STRING" id="290318.Cvib_0231"/>
<dbReference type="KEGG" id="pvi:Cvib_0231"/>
<dbReference type="eggNOG" id="COG0536">
    <property type="taxonomic scope" value="Bacteria"/>
</dbReference>
<dbReference type="HOGENOM" id="CLU_011747_2_0_10"/>
<dbReference type="OrthoDB" id="9807318at2"/>
<dbReference type="GO" id="GO:0005737">
    <property type="term" value="C:cytoplasm"/>
    <property type="evidence" value="ECO:0007669"/>
    <property type="project" value="UniProtKB-SubCell"/>
</dbReference>
<dbReference type="GO" id="GO:0005525">
    <property type="term" value="F:GTP binding"/>
    <property type="evidence" value="ECO:0007669"/>
    <property type="project" value="UniProtKB-UniRule"/>
</dbReference>
<dbReference type="GO" id="GO:0003924">
    <property type="term" value="F:GTPase activity"/>
    <property type="evidence" value="ECO:0007669"/>
    <property type="project" value="UniProtKB-UniRule"/>
</dbReference>
<dbReference type="GO" id="GO:0000287">
    <property type="term" value="F:magnesium ion binding"/>
    <property type="evidence" value="ECO:0007669"/>
    <property type="project" value="InterPro"/>
</dbReference>
<dbReference type="GO" id="GO:0042254">
    <property type="term" value="P:ribosome biogenesis"/>
    <property type="evidence" value="ECO:0007669"/>
    <property type="project" value="UniProtKB-UniRule"/>
</dbReference>
<dbReference type="CDD" id="cd01898">
    <property type="entry name" value="Obg"/>
    <property type="match status" value="1"/>
</dbReference>
<dbReference type="FunFam" id="2.70.210.12:FF:000001">
    <property type="entry name" value="GTPase Obg"/>
    <property type="match status" value="1"/>
</dbReference>
<dbReference type="Gene3D" id="2.70.210.12">
    <property type="entry name" value="GTP1/OBG domain"/>
    <property type="match status" value="1"/>
</dbReference>
<dbReference type="Gene3D" id="3.40.50.300">
    <property type="entry name" value="P-loop containing nucleotide triphosphate hydrolases"/>
    <property type="match status" value="1"/>
</dbReference>
<dbReference type="HAMAP" id="MF_01454">
    <property type="entry name" value="GTPase_Obg"/>
    <property type="match status" value="1"/>
</dbReference>
<dbReference type="InterPro" id="IPR031167">
    <property type="entry name" value="G_OBG"/>
</dbReference>
<dbReference type="InterPro" id="IPR006073">
    <property type="entry name" value="GTP-bd"/>
</dbReference>
<dbReference type="InterPro" id="IPR014100">
    <property type="entry name" value="GTP-bd_Obg/CgtA"/>
</dbReference>
<dbReference type="InterPro" id="IPR006074">
    <property type="entry name" value="GTP1-OBG_CS"/>
</dbReference>
<dbReference type="InterPro" id="IPR006169">
    <property type="entry name" value="GTP1_OBG_dom"/>
</dbReference>
<dbReference type="InterPro" id="IPR036726">
    <property type="entry name" value="GTP1_OBG_dom_sf"/>
</dbReference>
<dbReference type="InterPro" id="IPR045086">
    <property type="entry name" value="OBG_GTPase"/>
</dbReference>
<dbReference type="InterPro" id="IPR027417">
    <property type="entry name" value="P-loop_NTPase"/>
</dbReference>
<dbReference type="NCBIfam" id="TIGR02729">
    <property type="entry name" value="Obg_CgtA"/>
    <property type="match status" value="1"/>
</dbReference>
<dbReference type="NCBIfam" id="NF008955">
    <property type="entry name" value="PRK12297.1"/>
    <property type="match status" value="1"/>
</dbReference>
<dbReference type="NCBIfam" id="NF008956">
    <property type="entry name" value="PRK12299.1"/>
    <property type="match status" value="1"/>
</dbReference>
<dbReference type="PANTHER" id="PTHR11702">
    <property type="entry name" value="DEVELOPMENTALLY REGULATED GTP-BINDING PROTEIN-RELATED"/>
    <property type="match status" value="1"/>
</dbReference>
<dbReference type="PANTHER" id="PTHR11702:SF31">
    <property type="entry name" value="MITOCHONDRIAL RIBOSOME-ASSOCIATED GTPASE 2"/>
    <property type="match status" value="1"/>
</dbReference>
<dbReference type="Pfam" id="PF01018">
    <property type="entry name" value="GTP1_OBG"/>
    <property type="match status" value="1"/>
</dbReference>
<dbReference type="Pfam" id="PF01926">
    <property type="entry name" value="MMR_HSR1"/>
    <property type="match status" value="1"/>
</dbReference>
<dbReference type="PIRSF" id="PIRSF002401">
    <property type="entry name" value="GTP_bd_Obg/CgtA"/>
    <property type="match status" value="1"/>
</dbReference>
<dbReference type="PRINTS" id="PR00326">
    <property type="entry name" value="GTP1OBG"/>
</dbReference>
<dbReference type="SUPFAM" id="SSF82051">
    <property type="entry name" value="Obg GTP-binding protein N-terminal domain"/>
    <property type="match status" value="1"/>
</dbReference>
<dbReference type="SUPFAM" id="SSF52540">
    <property type="entry name" value="P-loop containing nucleoside triphosphate hydrolases"/>
    <property type="match status" value="1"/>
</dbReference>
<dbReference type="PROSITE" id="PS51710">
    <property type="entry name" value="G_OBG"/>
    <property type="match status" value="1"/>
</dbReference>
<dbReference type="PROSITE" id="PS00905">
    <property type="entry name" value="GTP1_OBG"/>
    <property type="match status" value="1"/>
</dbReference>
<dbReference type="PROSITE" id="PS51883">
    <property type="entry name" value="OBG"/>
    <property type="match status" value="1"/>
</dbReference>
<proteinExistence type="inferred from homology"/>
<name>OBG_CHLPM</name>
<evidence type="ECO:0000255" key="1">
    <source>
        <dbReference type="HAMAP-Rule" id="MF_01454"/>
    </source>
</evidence>
<evidence type="ECO:0000255" key="2">
    <source>
        <dbReference type="PROSITE-ProRule" id="PRU01231"/>
    </source>
</evidence>
<evidence type="ECO:0000256" key="3">
    <source>
        <dbReference type="SAM" id="MobiDB-lite"/>
    </source>
</evidence>
<protein>
    <recommendedName>
        <fullName evidence="1">GTPase Obg</fullName>
        <ecNumber evidence="1">3.6.5.-</ecNumber>
    </recommendedName>
    <alternativeName>
        <fullName evidence="1">GTP-binding protein Obg</fullName>
    </alternativeName>
</protein>
<keyword id="KW-0963">Cytoplasm</keyword>
<keyword id="KW-0342">GTP-binding</keyword>
<keyword id="KW-0378">Hydrolase</keyword>
<keyword id="KW-0460">Magnesium</keyword>
<keyword id="KW-0479">Metal-binding</keyword>
<keyword id="KW-0547">Nucleotide-binding</keyword>
<reference key="1">
    <citation type="submission" date="2007-03" db="EMBL/GenBank/DDBJ databases">
        <title>Complete sequence of Prosthecochloris vibrioformis DSM 265.</title>
        <authorList>
            <consortium name="US DOE Joint Genome Institute"/>
            <person name="Copeland A."/>
            <person name="Lucas S."/>
            <person name="Lapidus A."/>
            <person name="Barry K."/>
            <person name="Detter J.C."/>
            <person name="Glavina del Rio T."/>
            <person name="Hammon N."/>
            <person name="Israni S."/>
            <person name="Pitluck S."/>
            <person name="Schmutz J."/>
            <person name="Larimer F."/>
            <person name="Land M."/>
            <person name="Hauser L."/>
            <person name="Mikhailova N."/>
            <person name="Li T."/>
            <person name="Overmann J."/>
            <person name="Schuster S.C."/>
            <person name="Bryant D.A."/>
            <person name="Richardson P."/>
        </authorList>
    </citation>
    <scope>NUCLEOTIDE SEQUENCE [LARGE SCALE GENOMIC DNA]</scope>
    <source>
        <strain>DSM 265 / 1930</strain>
    </source>
</reference>
<organism>
    <name type="scientific">Chlorobium phaeovibrioides (strain DSM 265 / 1930)</name>
    <name type="common">Prosthecochloris vibrioformis (strain DSM 265)</name>
    <dbReference type="NCBI Taxonomy" id="290318"/>
    <lineage>
        <taxon>Bacteria</taxon>
        <taxon>Pseudomonadati</taxon>
        <taxon>Chlorobiota</taxon>
        <taxon>Chlorobiia</taxon>
        <taxon>Chlorobiales</taxon>
        <taxon>Chlorobiaceae</taxon>
        <taxon>Chlorobium/Pelodictyon group</taxon>
        <taxon>Chlorobium</taxon>
    </lineage>
</organism>
<feature type="chain" id="PRO_0000386145" description="GTPase Obg">
    <location>
        <begin position="1"/>
        <end position="336"/>
    </location>
</feature>
<feature type="domain" description="Obg" evidence="2">
    <location>
        <begin position="1"/>
        <end position="159"/>
    </location>
</feature>
<feature type="domain" description="OBG-type G" evidence="1">
    <location>
        <begin position="160"/>
        <end position="323"/>
    </location>
</feature>
<feature type="region of interest" description="Disordered" evidence="3">
    <location>
        <begin position="120"/>
        <end position="143"/>
    </location>
</feature>
<feature type="compositionally biased region" description="Polar residues" evidence="3">
    <location>
        <begin position="129"/>
        <end position="138"/>
    </location>
</feature>
<feature type="binding site" evidence="1">
    <location>
        <begin position="166"/>
        <end position="173"/>
    </location>
    <ligand>
        <name>GTP</name>
        <dbReference type="ChEBI" id="CHEBI:37565"/>
    </ligand>
</feature>
<feature type="binding site" evidence="1">
    <location>
        <position position="173"/>
    </location>
    <ligand>
        <name>Mg(2+)</name>
        <dbReference type="ChEBI" id="CHEBI:18420"/>
    </ligand>
</feature>
<feature type="binding site" evidence="1">
    <location>
        <begin position="191"/>
        <end position="195"/>
    </location>
    <ligand>
        <name>GTP</name>
        <dbReference type="ChEBI" id="CHEBI:37565"/>
    </ligand>
</feature>
<feature type="binding site" evidence="1">
    <location>
        <position position="193"/>
    </location>
    <ligand>
        <name>Mg(2+)</name>
        <dbReference type="ChEBI" id="CHEBI:18420"/>
    </ligand>
</feature>
<feature type="binding site" evidence="1">
    <location>
        <begin position="213"/>
        <end position="216"/>
    </location>
    <ligand>
        <name>GTP</name>
        <dbReference type="ChEBI" id="CHEBI:37565"/>
    </ligand>
</feature>
<feature type="binding site" evidence="1">
    <location>
        <begin position="280"/>
        <end position="283"/>
    </location>
    <ligand>
        <name>GTP</name>
        <dbReference type="ChEBI" id="CHEBI:37565"/>
    </ligand>
</feature>
<feature type="binding site" evidence="1">
    <location>
        <begin position="304"/>
        <end position="306"/>
    </location>
    <ligand>
        <name>GTP</name>
        <dbReference type="ChEBI" id="CHEBI:37565"/>
    </ligand>
</feature>